<gene>
    <name type="primary">alr</name>
    <name type="ordered locus">Gbem_3461</name>
</gene>
<protein>
    <recommendedName>
        <fullName evidence="1">Alanine racemase</fullName>
        <ecNumber evidence="1">5.1.1.1</ecNumber>
    </recommendedName>
</protein>
<feature type="chain" id="PRO_1000164596" description="Alanine racemase">
    <location>
        <begin position="1"/>
        <end position="379"/>
    </location>
</feature>
<feature type="active site" description="Proton acceptor; specific for D-alanine" evidence="1">
    <location>
        <position position="37"/>
    </location>
</feature>
<feature type="active site" description="Proton acceptor; specific for L-alanine" evidence="1">
    <location>
        <position position="269"/>
    </location>
</feature>
<feature type="binding site" evidence="1">
    <location>
        <position position="137"/>
    </location>
    <ligand>
        <name>substrate</name>
    </ligand>
</feature>
<feature type="binding site" evidence="1">
    <location>
        <position position="317"/>
    </location>
    <ligand>
        <name>substrate</name>
    </ligand>
</feature>
<feature type="modified residue" description="N6-(pyridoxal phosphate)lysine" evidence="1">
    <location>
        <position position="37"/>
    </location>
</feature>
<reference key="1">
    <citation type="submission" date="2008-07" db="EMBL/GenBank/DDBJ databases">
        <title>Complete sequence of Geobacter bemidjiensis BEM.</title>
        <authorList>
            <consortium name="US DOE Joint Genome Institute"/>
            <person name="Lucas S."/>
            <person name="Copeland A."/>
            <person name="Lapidus A."/>
            <person name="Glavina del Rio T."/>
            <person name="Dalin E."/>
            <person name="Tice H."/>
            <person name="Bruce D."/>
            <person name="Goodwin L."/>
            <person name="Pitluck S."/>
            <person name="Kiss H."/>
            <person name="Brettin T."/>
            <person name="Detter J.C."/>
            <person name="Han C."/>
            <person name="Kuske C.R."/>
            <person name="Schmutz J."/>
            <person name="Larimer F."/>
            <person name="Land M."/>
            <person name="Hauser L."/>
            <person name="Kyrpides N."/>
            <person name="Lykidis A."/>
            <person name="Lovley D."/>
            <person name="Richardson P."/>
        </authorList>
    </citation>
    <scope>NUCLEOTIDE SEQUENCE [LARGE SCALE GENOMIC DNA]</scope>
    <source>
        <strain>ATCC BAA-1014 / DSM 16622 / JCM 12645 / Bem</strain>
    </source>
</reference>
<comment type="function">
    <text evidence="1">Catalyzes the interconversion of L-alanine and D-alanine. May also act on other amino acids.</text>
</comment>
<comment type="catalytic activity">
    <reaction evidence="1">
        <text>L-alanine = D-alanine</text>
        <dbReference type="Rhea" id="RHEA:20249"/>
        <dbReference type="ChEBI" id="CHEBI:57416"/>
        <dbReference type="ChEBI" id="CHEBI:57972"/>
        <dbReference type="EC" id="5.1.1.1"/>
    </reaction>
</comment>
<comment type="cofactor">
    <cofactor evidence="1">
        <name>pyridoxal 5'-phosphate</name>
        <dbReference type="ChEBI" id="CHEBI:597326"/>
    </cofactor>
</comment>
<comment type="pathway">
    <text evidence="1">Amino-acid biosynthesis; D-alanine biosynthesis; D-alanine from L-alanine: step 1/1.</text>
</comment>
<comment type="similarity">
    <text evidence="1">Belongs to the alanine racemase family.</text>
</comment>
<dbReference type="EC" id="5.1.1.1" evidence="1"/>
<dbReference type="EMBL" id="CP001124">
    <property type="protein sequence ID" value="ACH40454.1"/>
    <property type="molecule type" value="Genomic_DNA"/>
</dbReference>
<dbReference type="RefSeq" id="WP_012531887.1">
    <property type="nucleotide sequence ID" value="NC_011146.1"/>
</dbReference>
<dbReference type="SMR" id="B5EBG2"/>
<dbReference type="STRING" id="404380.Gbem_3461"/>
<dbReference type="KEGG" id="gbm:Gbem_3461"/>
<dbReference type="eggNOG" id="COG0787">
    <property type="taxonomic scope" value="Bacteria"/>
</dbReference>
<dbReference type="HOGENOM" id="CLU_028393_2_2_7"/>
<dbReference type="OrthoDB" id="9813814at2"/>
<dbReference type="UniPathway" id="UPA00042">
    <property type="reaction ID" value="UER00497"/>
</dbReference>
<dbReference type="Proteomes" id="UP000008825">
    <property type="component" value="Chromosome"/>
</dbReference>
<dbReference type="GO" id="GO:0005829">
    <property type="term" value="C:cytosol"/>
    <property type="evidence" value="ECO:0007669"/>
    <property type="project" value="TreeGrafter"/>
</dbReference>
<dbReference type="GO" id="GO:0008784">
    <property type="term" value="F:alanine racemase activity"/>
    <property type="evidence" value="ECO:0007669"/>
    <property type="project" value="UniProtKB-UniRule"/>
</dbReference>
<dbReference type="GO" id="GO:0030170">
    <property type="term" value="F:pyridoxal phosphate binding"/>
    <property type="evidence" value="ECO:0007669"/>
    <property type="project" value="UniProtKB-UniRule"/>
</dbReference>
<dbReference type="GO" id="GO:0030632">
    <property type="term" value="P:D-alanine biosynthetic process"/>
    <property type="evidence" value="ECO:0007669"/>
    <property type="project" value="UniProtKB-UniRule"/>
</dbReference>
<dbReference type="CDD" id="cd00430">
    <property type="entry name" value="PLPDE_III_AR"/>
    <property type="match status" value="1"/>
</dbReference>
<dbReference type="FunFam" id="3.20.20.10:FF:000002">
    <property type="entry name" value="Alanine racemase"/>
    <property type="match status" value="1"/>
</dbReference>
<dbReference type="Gene3D" id="3.20.20.10">
    <property type="entry name" value="Alanine racemase"/>
    <property type="match status" value="1"/>
</dbReference>
<dbReference type="Gene3D" id="2.40.37.10">
    <property type="entry name" value="Lyase, Ornithine Decarboxylase, Chain A, domain 1"/>
    <property type="match status" value="1"/>
</dbReference>
<dbReference type="HAMAP" id="MF_01201">
    <property type="entry name" value="Ala_racemase"/>
    <property type="match status" value="1"/>
</dbReference>
<dbReference type="InterPro" id="IPR000821">
    <property type="entry name" value="Ala_racemase"/>
</dbReference>
<dbReference type="InterPro" id="IPR009006">
    <property type="entry name" value="Ala_racemase/Decarboxylase_C"/>
</dbReference>
<dbReference type="InterPro" id="IPR011079">
    <property type="entry name" value="Ala_racemase_C"/>
</dbReference>
<dbReference type="InterPro" id="IPR001608">
    <property type="entry name" value="Ala_racemase_N"/>
</dbReference>
<dbReference type="InterPro" id="IPR020622">
    <property type="entry name" value="Ala_racemase_pyridoxalP-BS"/>
</dbReference>
<dbReference type="InterPro" id="IPR029066">
    <property type="entry name" value="PLP-binding_barrel"/>
</dbReference>
<dbReference type="NCBIfam" id="TIGR00492">
    <property type="entry name" value="alr"/>
    <property type="match status" value="1"/>
</dbReference>
<dbReference type="PANTHER" id="PTHR30511">
    <property type="entry name" value="ALANINE RACEMASE"/>
    <property type="match status" value="1"/>
</dbReference>
<dbReference type="PANTHER" id="PTHR30511:SF0">
    <property type="entry name" value="ALANINE RACEMASE, CATABOLIC-RELATED"/>
    <property type="match status" value="1"/>
</dbReference>
<dbReference type="Pfam" id="PF00842">
    <property type="entry name" value="Ala_racemase_C"/>
    <property type="match status" value="1"/>
</dbReference>
<dbReference type="Pfam" id="PF01168">
    <property type="entry name" value="Ala_racemase_N"/>
    <property type="match status" value="1"/>
</dbReference>
<dbReference type="PRINTS" id="PR00992">
    <property type="entry name" value="ALARACEMASE"/>
</dbReference>
<dbReference type="SMART" id="SM01005">
    <property type="entry name" value="Ala_racemase_C"/>
    <property type="match status" value="1"/>
</dbReference>
<dbReference type="SUPFAM" id="SSF50621">
    <property type="entry name" value="Alanine racemase C-terminal domain-like"/>
    <property type="match status" value="1"/>
</dbReference>
<dbReference type="SUPFAM" id="SSF51419">
    <property type="entry name" value="PLP-binding barrel"/>
    <property type="match status" value="1"/>
</dbReference>
<dbReference type="PROSITE" id="PS00395">
    <property type="entry name" value="ALANINE_RACEMASE"/>
    <property type="match status" value="1"/>
</dbReference>
<evidence type="ECO:0000255" key="1">
    <source>
        <dbReference type="HAMAP-Rule" id="MF_01201"/>
    </source>
</evidence>
<name>ALR_CITBB</name>
<proteinExistence type="inferred from homology"/>
<sequence length="379" mass="41234">MDSRPTVVEIDLAALRHNFSLVQKRVPEGCGLLAVVKADAYGHGFQYVSEELEKLGVDAFAVAFLAEGVQLRMSGITRPVLILGGIYPGEERRCIGLNISTALFSLEQAAALDQAALEIKCYRKAHIHLKVDTGMGRLGVPYHEVPEFLAKLKQFKNLELEGIFSHFASADELDPEGIAFTKLQAERFNAAVEEARRQGYAPTYVHVANSAAILTQDLPYCNLARPGIILYGALPSGDFEGQVPSQPVMRLKSRVAMLKWVEPGTSISYGRRYVAAERALIASVPVGYADGYCRSLTNKGEALIRGQRAKVAGTVCMDWIMLDVTNVKGVAVGDDVTLLGPDPMGDCISAEEMAEKAGTIPYEVLCGIATRRVRRVYLG</sequence>
<accession>B5EBG2</accession>
<organism>
    <name type="scientific">Citrifermentans bemidjiense (strain ATCC BAA-1014 / DSM 16622 / JCM 12645 / Bem)</name>
    <name type="common">Geobacter bemidjiensis</name>
    <dbReference type="NCBI Taxonomy" id="404380"/>
    <lineage>
        <taxon>Bacteria</taxon>
        <taxon>Pseudomonadati</taxon>
        <taxon>Thermodesulfobacteriota</taxon>
        <taxon>Desulfuromonadia</taxon>
        <taxon>Geobacterales</taxon>
        <taxon>Geobacteraceae</taxon>
        <taxon>Citrifermentans</taxon>
    </lineage>
</organism>
<keyword id="KW-0413">Isomerase</keyword>
<keyword id="KW-0663">Pyridoxal phosphate</keyword>
<keyword id="KW-1185">Reference proteome</keyword>